<feature type="chain" id="PRO_1000146648" description="Sulfite reductase [NADPH] hemoprotein beta-component">
    <location>
        <begin position="1"/>
        <end position="570"/>
    </location>
</feature>
<feature type="binding site" evidence="1">
    <location>
        <position position="434"/>
    </location>
    <ligand>
        <name>[4Fe-4S] cluster</name>
        <dbReference type="ChEBI" id="CHEBI:49883"/>
    </ligand>
</feature>
<feature type="binding site" evidence="1">
    <location>
        <position position="440"/>
    </location>
    <ligand>
        <name>[4Fe-4S] cluster</name>
        <dbReference type="ChEBI" id="CHEBI:49883"/>
    </ligand>
</feature>
<feature type="binding site" evidence="1">
    <location>
        <position position="479"/>
    </location>
    <ligand>
        <name>[4Fe-4S] cluster</name>
        <dbReference type="ChEBI" id="CHEBI:49883"/>
    </ligand>
</feature>
<feature type="binding site" evidence="1">
    <location>
        <position position="483"/>
    </location>
    <ligand>
        <name>[4Fe-4S] cluster</name>
        <dbReference type="ChEBI" id="CHEBI:49883"/>
    </ligand>
</feature>
<feature type="binding site" description="axial binding residue" evidence="1">
    <location>
        <position position="483"/>
    </location>
    <ligand>
        <name>siroheme</name>
        <dbReference type="ChEBI" id="CHEBI:60052"/>
    </ligand>
    <ligandPart>
        <name>Fe</name>
        <dbReference type="ChEBI" id="CHEBI:18248"/>
    </ligandPart>
</feature>
<comment type="function">
    <text evidence="1">Component of the sulfite reductase complex that catalyzes the 6-electron reduction of sulfite to sulfide. This is one of several activities required for the biosynthesis of L-cysteine from sulfate.</text>
</comment>
<comment type="catalytic activity">
    <reaction evidence="1">
        <text>hydrogen sulfide + 3 NADP(+) + 3 H2O = sulfite + 3 NADPH + 4 H(+)</text>
        <dbReference type="Rhea" id="RHEA:13801"/>
        <dbReference type="ChEBI" id="CHEBI:15377"/>
        <dbReference type="ChEBI" id="CHEBI:15378"/>
        <dbReference type="ChEBI" id="CHEBI:17359"/>
        <dbReference type="ChEBI" id="CHEBI:29919"/>
        <dbReference type="ChEBI" id="CHEBI:57783"/>
        <dbReference type="ChEBI" id="CHEBI:58349"/>
        <dbReference type="EC" id="1.8.1.2"/>
    </reaction>
</comment>
<comment type="cofactor">
    <cofactor evidence="1">
        <name>siroheme</name>
        <dbReference type="ChEBI" id="CHEBI:60052"/>
    </cofactor>
    <text evidence="1">Binds 1 siroheme per subunit.</text>
</comment>
<comment type="cofactor">
    <cofactor evidence="1">
        <name>[4Fe-4S] cluster</name>
        <dbReference type="ChEBI" id="CHEBI:49883"/>
    </cofactor>
    <text evidence="1">Binds 1 [4Fe-4S] cluster per subunit.</text>
</comment>
<comment type="pathway">
    <text evidence="1">Sulfur metabolism; hydrogen sulfide biosynthesis; hydrogen sulfide from sulfite (NADPH route): step 1/1.</text>
</comment>
<comment type="subunit">
    <text evidence="1">Alpha(8)-beta(8). The alpha component is a flavoprotein, the beta component is a hemoprotein.</text>
</comment>
<comment type="similarity">
    <text evidence="1">Belongs to the nitrite and sulfite reductase 4Fe-4S domain family.</text>
</comment>
<sequence length="570" mass="63960">MSEKHPGPLVVEGKLTDAERMKLESNYLRGTIAEDLNDGLTGGFKGDNFLLIRFHGMYQQDDRDIRAERAEQKLEPRHAMLLRCRLPGGVITTKQWQAIDKFAGENTIYGSIRLTNRQTFQFHGILKKNVKPVHQMLHSVGLDALATANDMNRNVLCTSNPYESQLHAEAYEWAKKISEHLLPRTRAYAEIWLDQEKVATTDEEPILGQTYLPRKFKTTVVIPPQNDIDLHANDMNFVAIAENGKLVGFNLLVGGGLSIEHGNKKTYARTASEFGYLPLEHTLAVAEAVVTTQRDWGNRTDRKNAKTKYTLERVGVETFKAEVERRAGIKFEPIRPYEFTGRGDRIGWVKGIDDNWHLTLFIENGRILDYPGRPLKTGLLEIAKIHKGDFRITANQNLIIAGVPESEKAKIEKIAKESGLMNAVTPQRENSMACVSFPTCPLAMAEAERFLPSFIDNIDNLMAKHGVSDEHIVMRVTGCPNGCGRAMLAEVGLVGKAPGRYNLHLGGNRIGTRIPRMYKENITEPEILASLDELIGRWAKEREAGEGFGDFTVRAGIIRPVLDPARDLWD</sequence>
<name>CYSI_ECOSE</name>
<dbReference type="EC" id="1.8.1.2" evidence="1"/>
<dbReference type="EMBL" id="AP009240">
    <property type="protein sequence ID" value="BAG78543.1"/>
    <property type="molecule type" value="Genomic_DNA"/>
</dbReference>
<dbReference type="RefSeq" id="WP_001290706.1">
    <property type="nucleotide sequence ID" value="NC_011415.1"/>
</dbReference>
<dbReference type="SMR" id="B6I6F7"/>
<dbReference type="GeneID" id="75205593"/>
<dbReference type="KEGG" id="ecy:ECSE_3019"/>
<dbReference type="HOGENOM" id="CLU_001975_3_2_6"/>
<dbReference type="UniPathway" id="UPA00140">
    <property type="reaction ID" value="UER00207"/>
</dbReference>
<dbReference type="Proteomes" id="UP000008199">
    <property type="component" value="Chromosome"/>
</dbReference>
<dbReference type="GO" id="GO:0009337">
    <property type="term" value="C:sulfite reductase complex (NADPH)"/>
    <property type="evidence" value="ECO:0007669"/>
    <property type="project" value="InterPro"/>
</dbReference>
<dbReference type="GO" id="GO:0051539">
    <property type="term" value="F:4 iron, 4 sulfur cluster binding"/>
    <property type="evidence" value="ECO:0007669"/>
    <property type="project" value="UniProtKB-KW"/>
</dbReference>
<dbReference type="GO" id="GO:0020037">
    <property type="term" value="F:heme binding"/>
    <property type="evidence" value="ECO:0007669"/>
    <property type="project" value="InterPro"/>
</dbReference>
<dbReference type="GO" id="GO:0046872">
    <property type="term" value="F:metal ion binding"/>
    <property type="evidence" value="ECO:0007669"/>
    <property type="project" value="UniProtKB-KW"/>
</dbReference>
<dbReference type="GO" id="GO:0050661">
    <property type="term" value="F:NADP binding"/>
    <property type="evidence" value="ECO:0007669"/>
    <property type="project" value="InterPro"/>
</dbReference>
<dbReference type="GO" id="GO:0050311">
    <property type="term" value="F:sulfite reductase (ferredoxin) activity"/>
    <property type="evidence" value="ECO:0007669"/>
    <property type="project" value="TreeGrafter"/>
</dbReference>
<dbReference type="GO" id="GO:0004783">
    <property type="term" value="F:sulfite reductase (NADPH) activity"/>
    <property type="evidence" value="ECO:0007669"/>
    <property type="project" value="UniProtKB-UniRule"/>
</dbReference>
<dbReference type="GO" id="GO:0019344">
    <property type="term" value="P:cysteine biosynthetic process"/>
    <property type="evidence" value="ECO:0007669"/>
    <property type="project" value="UniProtKB-KW"/>
</dbReference>
<dbReference type="GO" id="GO:0070814">
    <property type="term" value="P:hydrogen sulfide biosynthetic process"/>
    <property type="evidence" value="ECO:0007669"/>
    <property type="project" value="UniProtKB-UniRule"/>
</dbReference>
<dbReference type="GO" id="GO:0000103">
    <property type="term" value="P:sulfate assimilation"/>
    <property type="evidence" value="ECO:0007669"/>
    <property type="project" value="UniProtKB-UniRule"/>
</dbReference>
<dbReference type="FunFam" id="3.30.413.10:FF:000003">
    <property type="entry name" value="Sulfite reductase [NADPH] hemoprotein beta-component"/>
    <property type="match status" value="1"/>
</dbReference>
<dbReference type="FunFam" id="3.30.413.10:FF:000004">
    <property type="entry name" value="Sulfite reductase [NADPH] hemoprotein beta-component"/>
    <property type="match status" value="1"/>
</dbReference>
<dbReference type="Gene3D" id="3.30.413.10">
    <property type="entry name" value="Sulfite Reductase Hemoprotein, domain 1"/>
    <property type="match status" value="2"/>
</dbReference>
<dbReference type="HAMAP" id="MF_01540">
    <property type="entry name" value="CysI"/>
    <property type="match status" value="1"/>
</dbReference>
<dbReference type="InterPro" id="IPR011786">
    <property type="entry name" value="CysI"/>
</dbReference>
<dbReference type="InterPro" id="IPR005117">
    <property type="entry name" value="NiRdtase/SiRdtase_haem-b_fer"/>
</dbReference>
<dbReference type="InterPro" id="IPR036136">
    <property type="entry name" value="Nit/Sulf_reduc_fer-like_dom_sf"/>
</dbReference>
<dbReference type="InterPro" id="IPR006067">
    <property type="entry name" value="NO2/SO3_Rdtase_4Fe4S_dom"/>
</dbReference>
<dbReference type="InterPro" id="IPR045169">
    <property type="entry name" value="NO2/SO3_Rdtase_4Fe4S_prot"/>
</dbReference>
<dbReference type="InterPro" id="IPR045854">
    <property type="entry name" value="NO2/SO3_Rdtase_4Fe4S_sf"/>
</dbReference>
<dbReference type="InterPro" id="IPR006066">
    <property type="entry name" value="NO2/SO3_Rdtase_FeS/sirohaem_BS"/>
</dbReference>
<dbReference type="NCBIfam" id="TIGR02041">
    <property type="entry name" value="CysI"/>
    <property type="match status" value="1"/>
</dbReference>
<dbReference type="NCBIfam" id="NF010029">
    <property type="entry name" value="PRK13504.1"/>
    <property type="match status" value="1"/>
</dbReference>
<dbReference type="PANTHER" id="PTHR11493:SF47">
    <property type="entry name" value="SULFITE REDUCTASE [NADPH] SUBUNIT BETA"/>
    <property type="match status" value="1"/>
</dbReference>
<dbReference type="PANTHER" id="PTHR11493">
    <property type="entry name" value="SULFITE REDUCTASE [NADPH] SUBUNIT BETA-RELATED"/>
    <property type="match status" value="1"/>
</dbReference>
<dbReference type="Pfam" id="PF01077">
    <property type="entry name" value="NIR_SIR"/>
    <property type="match status" value="1"/>
</dbReference>
<dbReference type="Pfam" id="PF03460">
    <property type="entry name" value="NIR_SIR_ferr"/>
    <property type="match status" value="2"/>
</dbReference>
<dbReference type="PRINTS" id="PR00397">
    <property type="entry name" value="SIROHAEM"/>
</dbReference>
<dbReference type="SUPFAM" id="SSF56014">
    <property type="entry name" value="Nitrite and sulphite reductase 4Fe-4S domain-like"/>
    <property type="match status" value="2"/>
</dbReference>
<dbReference type="SUPFAM" id="SSF55124">
    <property type="entry name" value="Nitrite/Sulfite reductase N-terminal domain-like"/>
    <property type="match status" value="2"/>
</dbReference>
<dbReference type="PROSITE" id="PS00365">
    <property type="entry name" value="NIR_SIR"/>
    <property type="match status" value="1"/>
</dbReference>
<protein>
    <recommendedName>
        <fullName evidence="1">Sulfite reductase [NADPH] hemoprotein beta-component</fullName>
        <shortName evidence="1">SiR-HP</shortName>
        <shortName evidence="1">SiRHP</shortName>
        <ecNumber evidence="1">1.8.1.2</ecNumber>
    </recommendedName>
</protein>
<gene>
    <name evidence="1" type="primary">cysI</name>
    <name type="ordered locus">ECSE_3019</name>
</gene>
<organism>
    <name type="scientific">Escherichia coli (strain SE11)</name>
    <dbReference type="NCBI Taxonomy" id="409438"/>
    <lineage>
        <taxon>Bacteria</taxon>
        <taxon>Pseudomonadati</taxon>
        <taxon>Pseudomonadota</taxon>
        <taxon>Gammaproteobacteria</taxon>
        <taxon>Enterobacterales</taxon>
        <taxon>Enterobacteriaceae</taxon>
        <taxon>Escherichia</taxon>
    </lineage>
</organism>
<reference key="1">
    <citation type="journal article" date="2008" name="DNA Res.">
        <title>Complete genome sequence and comparative analysis of the wild-type commensal Escherichia coli strain SE11 isolated from a healthy adult.</title>
        <authorList>
            <person name="Oshima K."/>
            <person name="Toh H."/>
            <person name="Ogura Y."/>
            <person name="Sasamoto H."/>
            <person name="Morita H."/>
            <person name="Park S.-H."/>
            <person name="Ooka T."/>
            <person name="Iyoda S."/>
            <person name="Taylor T.D."/>
            <person name="Hayashi T."/>
            <person name="Itoh K."/>
            <person name="Hattori M."/>
        </authorList>
    </citation>
    <scope>NUCLEOTIDE SEQUENCE [LARGE SCALE GENOMIC DNA]</scope>
    <source>
        <strain>SE11</strain>
    </source>
</reference>
<accession>B6I6F7</accession>
<proteinExistence type="inferred from homology"/>
<keyword id="KW-0004">4Fe-4S</keyword>
<keyword id="KW-0028">Amino-acid biosynthesis</keyword>
<keyword id="KW-0198">Cysteine biosynthesis</keyword>
<keyword id="KW-0349">Heme</keyword>
<keyword id="KW-0408">Iron</keyword>
<keyword id="KW-0411">Iron-sulfur</keyword>
<keyword id="KW-0479">Metal-binding</keyword>
<keyword id="KW-0521">NADP</keyword>
<keyword id="KW-0560">Oxidoreductase</keyword>
<evidence type="ECO:0000255" key="1">
    <source>
        <dbReference type="HAMAP-Rule" id="MF_01540"/>
    </source>
</evidence>